<organism>
    <name type="scientific">Nitratiruptor sp. (strain SB155-2)</name>
    <dbReference type="NCBI Taxonomy" id="387092"/>
    <lineage>
        <taxon>Bacteria</taxon>
        <taxon>Pseudomonadati</taxon>
        <taxon>Campylobacterota</taxon>
        <taxon>Epsilonproteobacteria</taxon>
        <taxon>Nautiliales</taxon>
        <taxon>Nitratiruptoraceae</taxon>
        <taxon>Nitratiruptor</taxon>
    </lineage>
</organism>
<accession>A6Q544</accession>
<feature type="chain" id="PRO_1000058963" description="Sec-independent protein translocase protein TatA">
    <location>
        <begin position="1"/>
        <end position="78"/>
    </location>
</feature>
<feature type="transmembrane region" description="Helical" evidence="1">
    <location>
        <begin position="1"/>
        <end position="21"/>
    </location>
</feature>
<feature type="region of interest" description="Disordered" evidence="2">
    <location>
        <begin position="46"/>
        <end position="78"/>
    </location>
</feature>
<feature type="compositionally biased region" description="Basic and acidic residues" evidence="2">
    <location>
        <begin position="52"/>
        <end position="62"/>
    </location>
</feature>
<feature type="compositionally biased region" description="Low complexity" evidence="2">
    <location>
        <begin position="63"/>
        <end position="78"/>
    </location>
</feature>
<proteinExistence type="inferred from homology"/>
<name>TATA_NITSB</name>
<protein>
    <recommendedName>
        <fullName evidence="1">Sec-independent protein translocase protein TatA</fullName>
    </recommendedName>
</protein>
<comment type="function">
    <text evidence="1">Part of the twin-arginine translocation (Tat) system that transports large folded proteins containing a characteristic twin-arginine motif in their signal peptide across membranes. TatA could form the protein-conducting channel of the Tat system.</text>
</comment>
<comment type="subunit">
    <text evidence="1">The Tat system comprises two distinct complexes: a TatABC complex, containing multiple copies of TatA, TatB and TatC subunits, and a separate TatA complex, containing only TatA subunits. Substrates initially bind to the TatABC complex, which probably triggers association of the separate TatA complex to form the active translocon.</text>
</comment>
<comment type="subcellular location">
    <subcellularLocation>
        <location evidence="1">Cell inner membrane</location>
        <topology evidence="1">Single-pass membrane protein</topology>
    </subcellularLocation>
</comment>
<comment type="similarity">
    <text evidence="1">Belongs to the TatA/E family.</text>
</comment>
<sequence length="78" mass="8495">MGMPSMPELLIILLIVVLLFGAKKIPELAKGLGSGIKNFKKAMKEDEEEVATENKKEIEEKTTASTTKTTADQDTTKA</sequence>
<dbReference type="EMBL" id="AP009178">
    <property type="protein sequence ID" value="BAF70603.1"/>
    <property type="molecule type" value="Genomic_DNA"/>
</dbReference>
<dbReference type="RefSeq" id="WP_012082866.1">
    <property type="nucleotide sequence ID" value="NC_009662.1"/>
</dbReference>
<dbReference type="SMR" id="A6Q544"/>
<dbReference type="FunCoup" id="A6Q544">
    <property type="interactions" value="422"/>
</dbReference>
<dbReference type="STRING" id="387092.NIS_1496"/>
<dbReference type="KEGG" id="nis:NIS_1496"/>
<dbReference type="eggNOG" id="COG1826">
    <property type="taxonomic scope" value="Bacteria"/>
</dbReference>
<dbReference type="HOGENOM" id="CLU_086034_5_4_7"/>
<dbReference type="InParanoid" id="A6Q544"/>
<dbReference type="OrthoDB" id="9813726at2"/>
<dbReference type="Proteomes" id="UP000001118">
    <property type="component" value="Chromosome"/>
</dbReference>
<dbReference type="GO" id="GO:0033281">
    <property type="term" value="C:TAT protein transport complex"/>
    <property type="evidence" value="ECO:0007669"/>
    <property type="project" value="UniProtKB-UniRule"/>
</dbReference>
<dbReference type="GO" id="GO:0008320">
    <property type="term" value="F:protein transmembrane transporter activity"/>
    <property type="evidence" value="ECO:0007669"/>
    <property type="project" value="UniProtKB-UniRule"/>
</dbReference>
<dbReference type="GO" id="GO:0043953">
    <property type="term" value="P:protein transport by the Tat complex"/>
    <property type="evidence" value="ECO:0007669"/>
    <property type="project" value="UniProtKB-UniRule"/>
</dbReference>
<dbReference type="Gene3D" id="1.20.5.3310">
    <property type="match status" value="1"/>
</dbReference>
<dbReference type="HAMAP" id="MF_00236">
    <property type="entry name" value="TatA_E"/>
    <property type="match status" value="1"/>
</dbReference>
<dbReference type="InterPro" id="IPR003369">
    <property type="entry name" value="TatA/B/E"/>
</dbReference>
<dbReference type="InterPro" id="IPR006312">
    <property type="entry name" value="TatA/E"/>
</dbReference>
<dbReference type="NCBIfam" id="TIGR01411">
    <property type="entry name" value="tatAE"/>
    <property type="match status" value="1"/>
</dbReference>
<dbReference type="PANTHER" id="PTHR42982">
    <property type="entry name" value="SEC-INDEPENDENT PROTEIN TRANSLOCASE PROTEIN TATA"/>
    <property type="match status" value="1"/>
</dbReference>
<dbReference type="PANTHER" id="PTHR42982:SF1">
    <property type="entry name" value="SEC-INDEPENDENT PROTEIN TRANSLOCASE PROTEIN TATA"/>
    <property type="match status" value="1"/>
</dbReference>
<dbReference type="Pfam" id="PF02416">
    <property type="entry name" value="TatA_B_E"/>
    <property type="match status" value="1"/>
</dbReference>
<reference key="1">
    <citation type="journal article" date="2007" name="Proc. Natl. Acad. Sci. U.S.A.">
        <title>Deep-sea vent epsilon-proteobacterial genomes provide insights into emergence of pathogens.</title>
        <authorList>
            <person name="Nakagawa S."/>
            <person name="Takaki Y."/>
            <person name="Shimamura S."/>
            <person name="Reysenbach A.-L."/>
            <person name="Takai K."/>
            <person name="Horikoshi K."/>
        </authorList>
    </citation>
    <scope>NUCLEOTIDE SEQUENCE [LARGE SCALE GENOMIC DNA]</scope>
    <source>
        <strain>SB155-2</strain>
    </source>
</reference>
<keyword id="KW-0997">Cell inner membrane</keyword>
<keyword id="KW-1003">Cell membrane</keyword>
<keyword id="KW-0472">Membrane</keyword>
<keyword id="KW-0653">Protein transport</keyword>
<keyword id="KW-1185">Reference proteome</keyword>
<keyword id="KW-0811">Translocation</keyword>
<keyword id="KW-0812">Transmembrane</keyword>
<keyword id="KW-1133">Transmembrane helix</keyword>
<keyword id="KW-0813">Transport</keyword>
<evidence type="ECO:0000255" key="1">
    <source>
        <dbReference type="HAMAP-Rule" id="MF_00236"/>
    </source>
</evidence>
<evidence type="ECO:0000256" key="2">
    <source>
        <dbReference type="SAM" id="MobiDB-lite"/>
    </source>
</evidence>
<gene>
    <name evidence="1" type="primary">tatA</name>
    <name type="ordered locus">NIS_1496</name>
</gene>